<keyword id="KW-0694">RNA-binding</keyword>
<keyword id="KW-0804">Transcription</keyword>
<keyword id="KW-0889">Transcription antitermination</keyword>
<keyword id="KW-0805">Transcription regulation</keyword>
<dbReference type="EMBL" id="AM260522">
    <property type="protein sequence ID" value="CAJ99100.1"/>
    <property type="molecule type" value="Genomic_DNA"/>
</dbReference>
<dbReference type="RefSeq" id="WP_011577215.1">
    <property type="nucleotide sequence ID" value="NC_008229.1"/>
</dbReference>
<dbReference type="SMR" id="Q17Z26"/>
<dbReference type="STRING" id="382638.Hac_0254"/>
<dbReference type="GeneID" id="31757767"/>
<dbReference type="KEGG" id="hac:Hac_0254"/>
<dbReference type="eggNOG" id="COG0781">
    <property type="taxonomic scope" value="Bacteria"/>
</dbReference>
<dbReference type="HOGENOM" id="CLU_087843_3_3_7"/>
<dbReference type="OrthoDB" id="9797817at2"/>
<dbReference type="BioCyc" id="HACI382638:HAC_RS01105-MONOMER"/>
<dbReference type="Proteomes" id="UP000000775">
    <property type="component" value="Chromosome"/>
</dbReference>
<dbReference type="GO" id="GO:0005829">
    <property type="term" value="C:cytosol"/>
    <property type="evidence" value="ECO:0007669"/>
    <property type="project" value="TreeGrafter"/>
</dbReference>
<dbReference type="GO" id="GO:0003723">
    <property type="term" value="F:RNA binding"/>
    <property type="evidence" value="ECO:0007669"/>
    <property type="project" value="UniProtKB-UniRule"/>
</dbReference>
<dbReference type="GO" id="GO:0006353">
    <property type="term" value="P:DNA-templated transcription termination"/>
    <property type="evidence" value="ECO:0007669"/>
    <property type="project" value="UniProtKB-UniRule"/>
</dbReference>
<dbReference type="GO" id="GO:0031564">
    <property type="term" value="P:transcription antitermination"/>
    <property type="evidence" value="ECO:0007669"/>
    <property type="project" value="UniProtKB-KW"/>
</dbReference>
<dbReference type="CDD" id="cd00619">
    <property type="entry name" value="Terminator_NusB"/>
    <property type="match status" value="1"/>
</dbReference>
<dbReference type="Gene3D" id="1.10.940.10">
    <property type="entry name" value="NusB-like"/>
    <property type="match status" value="1"/>
</dbReference>
<dbReference type="HAMAP" id="MF_00073">
    <property type="entry name" value="NusB"/>
    <property type="match status" value="1"/>
</dbReference>
<dbReference type="InterPro" id="IPR035926">
    <property type="entry name" value="NusB-like_sf"/>
</dbReference>
<dbReference type="InterPro" id="IPR011605">
    <property type="entry name" value="NusB_fam"/>
</dbReference>
<dbReference type="InterPro" id="IPR006027">
    <property type="entry name" value="NusB_RsmB_TIM44"/>
</dbReference>
<dbReference type="NCBIfam" id="TIGR01951">
    <property type="entry name" value="nusB"/>
    <property type="match status" value="1"/>
</dbReference>
<dbReference type="PANTHER" id="PTHR11078:SF3">
    <property type="entry name" value="ANTITERMINATION NUSB DOMAIN-CONTAINING PROTEIN"/>
    <property type="match status" value="1"/>
</dbReference>
<dbReference type="PANTHER" id="PTHR11078">
    <property type="entry name" value="N UTILIZATION SUBSTANCE PROTEIN B-RELATED"/>
    <property type="match status" value="1"/>
</dbReference>
<dbReference type="Pfam" id="PF01029">
    <property type="entry name" value="NusB"/>
    <property type="match status" value="1"/>
</dbReference>
<dbReference type="SUPFAM" id="SSF48013">
    <property type="entry name" value="NusB-like"/>
    <property type="match status" value="1"/>
</dbReference>
<sequence>MATRTQARGAVIELLYAFESGNEEIKKIAPSMLEEKKIKNNQLAFALSLFNGVLEKINEIDALIEPHLKDWDFKRLGSMEKAILRLGAYEIGFTPTQNPIIINECIELGKLYAEPNTPKFLNAILDSLSKKLAQKPLT</sequence>
<name>NUSB_HELAH</name>
<accession>Q17Z26</accession>
<gene>
    <name evidence="1" type="primary">nusB</name>
    <name type="ordered locus">Hac_0254</name>
</gene>
<protein>
    <recommendedName>
        <fullName evidence="1">Transcription antitermination protein NusB</fullName>
    </recommendedName>
    <alternativeName>
        <fullName evidence="1">Antitermination factor NusB</fullName>
    </alternativeName>
</protein>
<comment type="function">
    <text evidence="1">Involved in transcription antitermination. Required for transcription of ribosomal RNA (rRNA) genes. Binds specifically to the boxA antiterminator sequence of the ribosomal RNA (rrn) operons.</text>
</comment>
<comment type="similarity">
    <text evidence="1">Belongs to the NusB family.</text>
</comment>
<organism>
    <name type="scientific">Helicobacter acinonychis (strain Sheeba)</name>
    <dbReference type="NCBI Taxonomy" id="382638"/>
    <lineage>
        <taxon>Bacteria</taxon>
        <taxon>Pseudomonadati</taxon>
        <taxon>Campylobacterota</taxon>
        <taxon>Epsilonproteobacteria</taxon>
        <taxon>Campylobacterales</taxon>
        <taxon>Helicobacteraceae</taxon>
        <taxon>Helicobacter</taxon>
    </lineage>
</organism>
<evidence type="ECO:0000255" key="1">
    <source>
        <dbReference type="HAMAP-Rule" id="MF_00073"/>
    </source>
</evidence>
<proteinExistence type="inferred from homology"/>
<reference key="1">
    <citation type="journal article" date="2006" name="PLoS Genet.">
        <title>Who ate whom? Adaptive Helicobacter genomic changes that accompanied a host jump from early humans to large felines.</title>
        <authorList>
            <person name="Eppinger M."/>
            <person name="Baar C."/>
            <person name="Linz B."/>
            <person name="Raddatz G."/>
            <person name="Lanz C."/>
            <person name="Keller H."/>
            <person name="Morelli G."/>
            <person name="Gressmann H."/>
            <person name="Achtman M."/>
            <person name="Schuster S.C."/>
        </authorList>
    </citation>
    <scope>NUCLEOTIDE SEQUENCE [LARGE SCALE GENOMIC DNA]</scope>
    <source>
        <strain>Sheeba</strain>
    </source>
</reference>
<feature type="chain" id="PRO_1000023739" description="Transcription antitermination protein NusB">
    <location>
        <begin position="1"/>
        <end position="138"/>
    </location>
</feature>